<dbReference type="EC" id="5.1.3.9" evidence="1"/>
<dbReference type="EMBL" id="AE004092">
    <property type="protein sequence ID" value="AAK33327.1"/>
    <property type="molecule type" value="Genomic_DNA"/>
</dbReference>
<dbReference type="EMBL" id="CP000017">
    <property type="protein sequence ID" value="AAZ50831.1"/>
    <property type="molecule type" value="Genomic_DNA"/>
</dbReference>
<dbReference type="RefSeq" id="NP_268606.1">
    <property type="nucleotide sequence ID" value="NC_002737.2"/>
</dbReference>
<dbReference type="PDB" id="1YXY">
    <property type="method" value="X-ray"/>
    <property type="resolution" value="1.60 A"/>
    <property type="chains" value="A/B=1-234"/>
</dbReference>
<dbReference type="PDBsum" id="1YXY"/>
<dbReference type="SMR" id="P65522"/>
<dbReference type="PaxDb" id="1314-HKU360_00252"/>
<dbReference type="KEGG" id="spy:SPy_0251"/>
<dbReference type="KEGG" id="spz:M5005_Spy0212"/>
<dbReference type="PATRIC" id="fig|160490.10.peg.220"/>
<dbReference type="HOGENOM" id="CLU_086300_1_0_9"/>
<dbReference type="OMA" id="QALGFDC"/>
<dbReference type="UniPathway" id="UPA00629">
    <property type="reaction ID" value="UER00682"/>
</dbReference>
<dbReference type="EvolutionaryTrace" id="P65522"/>
<dbReference type="Proteomes" id="UP000000750">
    <property type="component" value="Chromosome"/>
</dbReference>
<dbReference type="GO" id="GO:0005829">
    <property type="term" value="C:cytosol"/>
    <property type="evidence" value="ECO:0007669"/>
    <property type="project" value="TreeGrafter"/>
</dbReference>
<dbReference type="GO" id="GO:0047465">
    <property type="term" value="F:N-acylglucosamine-6-phosphate 2-epimerase activity"/>
    <property type="evidence" value="ECO:0007669"/>
    <property type="project" value="UniProtKB-EC"/>
</dbReference>
<dbReference type="GO" id="GO:0005975">
    <property type="term" value="P:carbohydrate metabolic process"/>
    <property type="evidence" value="ECO:0007669"/>
    <property type="project" value="UniProtKB-UniRule"/>
</dbReference>
<dbReference type="GO" id="GO:0006053">
    <property type="term" value="P:N-acetylmannosamine catabolic process"/>
    <property type="evidence" value="ECO:0007669"/>
    <property type="project" value="TreeGrafter"/>
</dbReference>
<dbReference type="GO" id="GO:0019262">
    <property type="term" value="P:N-acetylneuraminate catabolic process"/>
    <property type="evidence" value="ECO:0007669"/>
    <property type="project" value="UniProtKB-UniRule"/>
</dbReference>
<dbReference type="CDD" id="cd04729">
    <property type="entry name" value="NanE"/>
    <property type="match status" value="1"/>
</dbReference>
<dbReference type="FunFam" id="3.20.20.70:FF:000035">
    <property type="entry name" value="Putative N-acetylmannosamine-6-phosphate 2-epimerase"/>
    <property type="match status" value="1"/>
</dbReference>
<dbReference type="Gene3D" id="3.20.20.70">
    <property type="entry name" value="Aldolase class I"/>
    <property type="match status" value="1"/>
</dbReference>
<dbReference type="HAMAP" id="MF_01235">
    <property type="entry name" value="ManNAc6P_epimer"/>
    <property type="match status" value="1"/>
</dbReference>
<dbReference type="InterPro" id="IPR013785">
    <property type="entry name" value="Aldolase_TIM"/>
</dbReference>
<dbReference type="InterPro" id="IPR007260">
    <property type="entry name" value="NanE"/>
</dbReference>
<dbReference type="InterPro" id="IPR011060">
    <property type="entry name" value="RibuloseP-bd_barrel"/>
</dbReference>
<dbReference type="NCBIfam" id="NF002231">
    <property type="entry name" value="PRK01130.1"/>
    <property type="match status" value="1"/>
</dbReference>
<dbReference type="PANTHER" id="PTHR36204">
    <property type="entry name" value="N-ACETYLMANNOSAMINE-6-PHOSPHATE 2-EPIMERASE-RELATED"/>
    <property type="match status" value="1"/>
</dbReference>
<dbReference type="PANTHER" id="PTHR36204:SF1">
    <property type="entry name" value="N-ACETYLMANNOSAMINE-6-PHOSPHATE 2-EPIMERASE-RELATED"/>
    <property type="match status" value="1"/>
</dbReference>
<dbReference type="Pfam" id="PF04131">
    <property type="entry name" value="NanE"/>
    <property type="match status" value="1"/>
</dbReference>
<dbReference type="SUPFAM" id="SSF51366">
    <property type="entry name" value="Ribulose-phoshate binding barrel"/>
    <property type="match status" value="1"/>
</dbReference>
<accession>P65522</accession>
<accession>Q490Y7</accession>
<accession>Q9A1J0</accession>
<protein>
    <recommendedName>
        <fullName evidence="1">Putative N-acetylmannosamine-6-phosphate 2-epimerase</fullName>
        <ecNumber evidence="1">5.1.3.9</ecNumber>
    </recommendedName>
    <alternativeName>
        <fullName evidence="1">ManNAc-6-P epimerase</fullName>
    </alternativeName>
</protein>
<gene>
    <name evidence="1" type="primary">nanE</name>
    <name type="ordered locus">SPy_0251</name>
    <name type="ordered locus">M5005_Spy0212</name>
</gene>
<evidence type="ECO:0000255" key="1">
    <source>
        <dbReference type="HAMAP-Rule" id="MF_01235"/>
    </source>
</evidence>
<evidence type="ECO:0007829" key="2">
    <source>
        <dbReference type="PDB" id="1YXY"/>
    </source>
</evidence>
<sequence>MPDKPTKEKLMEQLKGGIIVSCQALPGEPLYSETGGIMPLMAKAAQEAGAVGIRANSVRDIKEIQAITDLPIIGIIKKDYPPQEPFITATMTEVDQLAALNIAVIAMDCTKRDRHDGLDIASFIRQVKEKYPNQLLMADISTFDEGLVAHQAGIDFVGTTLSGYTPYSRQEAGPDVALIEALCKAGIAVIAEGKIHSPEEAKKINDLGVAGIVVGGAITRPKEIAERFIEALKS</sequence>
<reference key="1">
    <citation type="journal article" date="2001" name="Proc. Natl. Acad. Sci. U.S.A.">
        <title>Complete genome sequence of an M1 strain of Streptococcus pyogenes.</title>
        <authorList>
            <person name="Ferretti J.J."/>
            <person name="McShan W.M."/>
            <person name="Ajdic D.J."/>
            <person name="Savic D.J."/>
            <person name="Savic G."/>
            <person name="Lyon K."/>
            <person name="Primeaux C."/>
            <person name="Sezate S."/>
            <person name="Suvorov A.N."/>
            <person name="Kenton S."/>
            <person name="Lai H.S."/>
            <person name="Lin S.P."/>
            <person name="Qian Y."/>
            <person name="Jia H.G."/>
            <person name="Najar F.Z."/>
            <person name="Ren Q."/>
            <person name="Zhu H."/>
            <person name="Song L."/>
            <person name="White J."/>
            <person name="Yuan X."/>
            <person name="Clifton S.W."/>
            <person name="Roe B.A."/>
            <person name="McLaughlin R.E."/>
        </authorList>
    </citation>
    <scope>NUCLEOTIDE SEQUENCE [LARGE SCALE GENOMIC DNA]</scope>
    <source>
        <strain>ATCC 700294 / SF370 / Serotype M1</strain>
    </source>
</reference>
<reference key="2">
    <citation type="journal article" date="2005" name="J. Infect. Dis.">
        <title>Evolutionary origin and emergence of a highly successful clone of serotype M1 group A Streptococcus involved multiple horizontal gene transfer events.</title>
        <authorList>
            <person name="Sumby P."/>
            <person name="Porcella S.F."/>
            <person name="Madrigal A.G."/>
            <person name="Barbian K.D."/>
            <person name="Virtaneva K."/>
            <person name="Ricklefs S.M."/>
            <person name="Sturdevant D.E."/>
            <person name="Graham M.R."/>
            <person name="Vuopio-Varkila J."/>
            <person name="Hoe N.P."/>
            <person name="Musser J.M."/>
        </authorList>
    </citation>
    <scope>NUCLEOTIDE SEQUENCE [LARGE SCALE GENOMIC DNA]</scope>
    <source>
        <strain>ATCC BAA-947 / MGAS5005 / Serotype M1</strain>
    </source>
</reference>
<name>NANE_STRP1</name>
<comment type="function">
    <text evidence="1">Converts N-acetylmannosamine-6-phosphate (ManNAc-6-P) to N-acetylglucosamine-6-phosphate (GlcNAc-6-P).</text>
</comment>
<comment type="catalytic activity">
    <reaction evidence="1">
        <text>an N-acyl-D-glucosamine 6-phosphate = an N-acyl-D-mannosamine 6-phosphate</text>
        <dbReference type="Rhea" id="RHEA:23932"/>
        <dbReference type="ChEBI" id="CHEBI:57599"/>
        <dbReference type="ChEBI" id="CHEBI:57666"/>
        <dbReference type="EC" id="5.1.3.9"/>
    </reaction>
</comment>
<comment type="pathway">
    <text evidence="1">Amino-sugar metabolism; N-acetylneuraminate degradation; D-fructose 6-phosphate from N-acetylneuraminate: step 3/5.</text>
</comment>
<comment type="similarity">
    <text evidence="1">Belongs to the NanE family.</text>
</comment>
<feature type="chain" id="PRO_0000179809" description="Putative N-acetylmannosamine-6-phosphate 2-epimerase">
    <location>
        <begin position="1"/>
        <end position="234"/>
    </location>
</feature>
<feature type="helix" evidence="2">
    <location>
        <begin position="7"/>
        <end position="14"/>
    </location>
</feature>
<feature type="strand" evidence="2">
    <location>
        <begin position="19"/>
        <end position="21"/>
    </location>
</feature>
<feature type="helix" evidence="2">
    <location>
        <begin position="38"/>
        <end position="48"/>
    </location>
</feature>
<feature type="strand" evidence="2">
    <location>
        <begin position="51"/>
        <end position="57"/>
    </location>
</feature>
<feature type="helix" evidence="2">
    <location>
        <begin position="58"/>
        <end position="65"/>
    </location>
</feature>
<feature type="strand" evidence="2">
    <location>
        <begin position="72"/>
        <end position="75"/>
    </location>
</feature>
<feature type="helix" evidence="2">
    <location>
        <begin position="91"/>
        <end position="98"/>
    </location>
</feature>
<feature type="turn" evidence="2">
    <location>
        <begin position="99"/>
        <end position="101"/>
    </location>
</feature>
<feature type="strand" evidence="2">
    <location>
        <begin position="103"/>
        <end position="108"/>
    </location>
</feature>
<feature type="helix" evidence="2">
    <location>
        <begin position="120"/>
        <end position="130"/>
    </location>
</feature>
<feature type="strand" evidence="2">
    <location>
        <begin position="135"/>
        <end position="139"/>
    </location>
</feature>
<feature type="helix" evidence="2">
    <location>
        <begin position="143"/>
        <end position="151"/>
    </location>
</feature>
<feature type="strand" evidence="2">
    <location>
        <begin position="155"/>
        <end position="158"/>
    </location>
</feature>
<feature type="turn" evidence="2">
    <location>
        <begin position="160"/>
        <end position="163"/>
    </location>
</feature>
<feature type="strand" evidence="2">
    <location>
        <begin position="171"/>
        <end position="173"/>
    </location>
</feature>
<feature type="helix" evidence="2">
    <location>
        <begin position="176"/>
        <end position="184"/>
    </location>
</feature>
<feature type="strand" evidence="2">
    <location>
        <begin position="189"/>
        <end position="193"/>
    </location>
</feature>
<feature type="helix" evidence="2">
    <location>
        <begin position="198"/>
        <end position="205"/>
    </location>
</feature>
<feature type="strand" evidence="2">
    <location>
        <begin position="210"/>
        <end position="214"/>
    </location>
</feature>
<feature type="helix" evidence="2">
    <location>
        <begin position="216"/>
        <end position="219"/>
    </location>
</feature>
<feature type="helix" evidence="2">
    <location>
        <begin position="221"/>
        <end position="231"/>
    </location>
</feature>
<organism>
    <name type="scientific">Streptococcus pyogenes serotype M1</name>
    <dbReference type="NCBI Taxonomy" id="301447"/>
    <lineage>
        <taxon>Bacteria</taxon>
        <taxon>Bacillati</taxon>
        <taxon>Bacillota</taxon>
        <taxon>Bacilli</taxon>
        <taxon>Lactobacillales</taxon>
        <taxon>Streptococcaceae</taxon>
        <taxon>Streptococcus</taxon>
    </lineage>
</organism>
<proteinExistence type="evidence at protein level"/>
<keyword id="KW-0002">3D-structure</keyword>
<keyword id="KW-0119">Carbohydrate metabolism</keyword>
<keyword id="KW-0413">Isomerase</keyword>
<keyword id="KW-1185">Reference proteome</keyword>